<evidence type="ECO:0000250" key="1"/>
<evidence type="ECO:0000255" key="2"/>
<evidence type="ECO:0000256" key="3">
    <source>
        <dbReference type="SAM" id="MobiDB-lite"/>
    </source>
</evidence>
<evidence type="ECO:0000305" key="4"/>
<reference key="1">
    <citation type="journal article" date="2009" name="Nature">
        <title>Evolution of pathogenicity and sexual reproduction in eight Candida genomes.</title>
        <authorList>
            <person name="Butler G."/>
            <person name="Rasmussen M.D."/>
            <person name="Lin M.F."/>
            <person name="Santos M.A.S."/>
            <person name="Sakthikumar S."/>
            <person name="Munro C.A."/>
            <person name="Rheinbay E."/>
            <person name="Grabherr M."/>
            <person name="Forche A."/>
            <person name="Reedy J.L."/>
            <person name="Agrafioti I."/>
            <person name="Arnaud M.B."/>
            <person name="Bates S."/>
            <person name="Brown A.J.P."/>
            <person name="Brunke S."/>
            <person name="Costanzo M.C."/>
            <person name="Fitzpatrick D.A."/>
            <person name="de Groot P.W.J."/>
            <person name="Harris D."/>
            <person name="Hoyer L.L."/>
            <person name="Hube B."/>
            <person name="Klis F.M."/>
            <person name="Kodira C."/>
            <person name="Lennard N."/>
            <person name="Logue M.E."/>
            <person name="Martin R."/>
            <person name="Neiman A.M."/>
            <person name="Nikolaou E."/>
            <person name="Quail M.A."/>
            <person name="Quinn J."/>
            <person name="Santos M.C."/>
            <person name="Schmitzberger F.F."/>
            <person name="Sherlock G."/>
            <person name="Shah P."/>
            <person name="Silverstein K.A.T."/>
            <person name="Skrzypek M.S."/>
            <person name="Soll D."/>
            <person name="Staggs R."/>
            <person name="Stansfield I."/>
            <person name="Stumpf M.P.H."/>
            <person name="Sudbery P.E."/>
            <person name="Srikantha T."/>
            <person name="Zeng Q."/>
            <person name="Berman J."/>
            <person name="Berriman M."/>
            <person name="Heitman J."/>
            <person name="Gow N.A.R."/>
            <person name="Lorenz M.C."/>
            <person name="Birren B.W."/>
            <person name="Kellis M."/>
            <person name="Cuomo C.A."/>
        </authorList>
    </citation>
    <scope>NUCLEOTIDE SEQUENCE [LARGE SCALE GENOMIC DNA]</scope>
    <source>
        <strain>ATCC 42720</strain>
    </source>
</reference>
<dbReference type="EC" id="3.1.-.-"/>
<dbReference type="EMBL" id="CH408079">
    <property type="protein sequence ID" value="EEQ39838.1"/>
    <property type="molecule type" value="Genomic_DNA"/>
</dbReference>
<dbReference type="RefSeq" id="XP_002616725.1">
    <property type="nucleotide sequence ID" value="XM_002616679.1"/>
</dbReference>
<dbReference type="FunCoup" id="C4Y732">
    <property type="interactions" value="18"/>
</dbReference>
<dbReference type="GeneID" id="8497084"/>
<dbReference type="KEGG" id="clu:CLUG_03966"/>
<dbReference type="VEuPathDB" id="FungiDB:CLUG_03966"/>
<dbReference type="HOGENOM" id="CLU_546279_0_0_1"/>
<dbReference type="InParanoid" id="C4Y732"/>
<dbReference type="OMA" id="LQVMYYR"/>
<dbReference type="OrthoDB" id="100237at4891"/>
<dbReference type="Proteomes" id="UP000007703">
    <property type="component" value="Unassembled WGS sequence"/>
</dbReference>
<dbReference type="GO" id="GO:0005739">
    <property type="term" value="C:mitochondrion"/>
    <property type="evidence" value="ECO:0007669"/>
    <property type="project" value="UniProtKB-SubCell"/>
</dbReference>
<dbReference type="GO" id="GO:0005634">
    <property type="term" value="C:nucleus"/>
    <property type="evidence" value="ECO:0007669"/>
    <property type="project" value="TreeGrafter"/>
</dbReference>
<dbReference type="GO" id="GO:0051539">
    <property type="term" value="F:4 iron, 4 sulfur cluster binding"/>
    <property type="evidence" value="ECO:0007669"/>
    <property type="project" value="UniProtKB-KW"/>
</dbReference>
<dbReference type="GO" id="GO:0003677">
    <property type="term" value="F:DNA binding"/>
    <property type="evidence" value="ECO:0007669"/>
    <property type="project" value="UniProtKB-KW"/>
</dbReference>
<dbReference type="GO" id="GO:0046872">
    <property type="term" value="F:metal ion binding"/>
    <property type="evidence" value="ECO:0007669"/>
    <property type="project" value="UniProtKB-KW"/>
</dbReference>
<dbReference type="GO" id="GO:0045145">
    <property type="term" value="F:single-stranded DNA 5'-3' DNA exonuclease activity"/>
    <property type="evidence" value="ECO:0007669"/>
    <property type="project" value="InterPro"/>
</dbReference>
<dbReference type="GO" id="GO:0036297">
    <property type="term" value="P:interstrand cross-link repair"/>
    <property type="evidence" value="ECO:0007669"/>
    <property type="project" value="TreeGrafter"/>
</dbReference>
<dbReference type="InterPro" id="IPR019190">
    <property type="entry name" value="EXOV"/>
</dbReference>
<dbReference type="PANTHER" id="PTHR14464">
    <property type="entry name" value="EXONUCLEASE V"/>
    <property type="match status" value="1"/>
</dbReference>
<dbReference type="PANTHER" id="PTHR14464:SF4">
    <property type="entry name" value="EXONUCLEASE V"/>
    <property type="match status" value="1"/>
</dbReference>
<dbReference type="Pfam" id="PF09810">
    <property type="entry name" value="Exo5"/>
    <property type="match status" value="1"/>
</dbReference>
<feature type="transit peptide" description="Mitochondrion" evidence="2">
    <location>
        <begin position="1"/>
        <end position="12"/>
    </location>
</feature>
<feature type="chain" id="PRO_0000406687" description="Exonuclease V, mitochondrial">
    <location>
        <begin position="13"/>
        <end position="499"/>
    </location>
</feature>
<feature type="region of interest" description="Disordered" evidence="3">
    <location>
        <begin position="1"/>
        <end position="27"/>
    </location>
</feature>
<proteinExistence type="inferred from homology"/>
<comment type="function">
    <text evidence="1">Single strand DNA specific 5'exonuclease involved in mitochondrial DNA replication and recombination. Releases dinucleotides as main products of catalysis. Has the capacity to slide across 5'double-stranded DNA or 5'RNA sequences and resumes cutting two nucleotides downstream of the double-stranded-to-single-stranded junction or RNA-to-DNA junction, respectively (By similarity).</text>
</comment>
<comment type="cofactor">
    <cofactor evidence="1">
        <name>Mg(2+)</name>
        <dbReference type="ChEBI" id="CHEBI:18420"/>
    </cofactor>
</comment>
<comment type="cofactor">
    <cofactor evidence="1">
        <name>[4Fe-4S] cluster</name>
        <dbReference type="ChEBI" id="CHEBI:49883"/>
    </cofactor>
    <text evidence="1">Binds 1 [4Fe-4S] cluster.</text>
</comment>
<comment type="subunit">
    <text evidence="1">Monomer.</text>
</comment>
<comment type="subcellular location">
    <subcellularLocation>
        <location evidence="1">Mitochondrion</location>
    </subcellularLocation>
</comment>
<comment type="similarity">
    <text evidence="4">Belongs to the EXO5 family.</text>
</comment>
<accession>C4Y732</accession>
<sequence length="499" mass="56099">MSRVLTFRVPPEQQQAPKPLLSDRSSTWPLLPQLAPTAVRPASPPSPKEELVLNVFGRGPDSLLMPPKHSLPPPFAFYTQFNGDASYMAEPRLSVTKLLVSSWCELREYYEVYAGSPRRVPTARLTQGTDYHRVLEERSHRAIDPSTVSARVEEILGEMPEERVLALTQGGSMAFKLAHQWVEQILVRCLAVAHTGYAREMHLHGFLDLTSGELATSKSTIGQGVLVNGIADMVRLEPAPYGHDRALPWDPQAVLELGPALEGAKARMDRLATNHTLEVRDVKTRAYNNVPKQSSVVEAARDQCMYYAQFLTTLAQNEEYAYQSLVENFTRRHIQTSHPLGEAHAAALLITNFGVLVEDYKALARGDALSFTPFDNATTFYVTEQPPEAYSLANFVDEPTFRTLLADFHGDYFADVDISVLFREWKRPLTPAYFCARAAQALYLFEKLKPSSVCVEYHNVKTGRIIECKSFPFDKHTLEEASKRAAQFLGRYSTTHKHR</sequence>
<keyword id="KW-0004">4Fe-4S</keyword>
<keyword id="KW-0238">DNA-binding</keyword>
<keyword id="KW-0269">Exonuclease</keyword>
<keyword id="KW-0378">Hydrolase</keyword>
<keyword id="KW-0408">Iron</keyword>
<keyword id="KW-0411">Iron-sulfur</keyword>
<keyword id="KW-0460">Magnesium</keyword>
<keyword id="KW-0479">Metal-binding</keyword>
<keyword id="KW-0496">Mitochondrion</keyword>
<keyword id="KW-0540">Nuclease</keyword>
<keyword id="KW-1185">Reference proteome</keyword>
<keyword id="KW-0809">Transit peptide</keyword>
<organism>
    <name type="scientific">Clavispora lusitaniae (strain ATCC 42720)</name>
    <name type="common">Yeast</name>
    <name type="synonym">Candida lusitaniae</name>
    <dbReference type="NCBI Taxonomy" id="306902"/>
    <lineage>
        <taxon>Eukaryota</taxon>
        <taxon>Fungi</taxon>
        <taxon>Dikarya</taxon>
        <taxon>Ascomycota</taxon>
        <taxon>Saccharomycotina</taxon>
        <taxon>Pichiomycetes</taxon>
        <taxon>Metschnikowiaceae</taxon>
        <taxon>Clavispora</taxon>
    </lineage>
</organism>
<gene>
    <name type="primary">EXO5</name>
    <name type="synonym">DEM1</name>
    <name type="ORF">CLUG_03966</name>
</gene>
<protein>
    <recommendedName>
        <fullName>Exonuclease V, mitochondrial</fullName>
        <shortName>Exo V</shortName>
        <ecNumber>3.1.-.-</ecNumber>
    </recommendedName>
    <alternativeName>
        <fullName>Defects in morphology protein 1</fullName>
    </alternativeName>
</protein>
<name>EXO5_CLAL4</name>